<protein>
    <recommendedName>
        <fullName evidence="1">Adenylosuccinate synthetase</fullName>
        <shortName evidence="1">AMPSase</shortName>
        <shortName evidence="1">AdSS</shortName>
        <ecNumber evidence="1">6.3.4.4</ecNumber>
    </recommendedName>
    <alternativeName>
        <fullName evidence="1">IMP--aspartate ligase</fullName>
    </alternativeName>
</protein>
<feature type="chain" id="PRO_1000000823" description="Adenylosuccinate synthetase">
    <location>
        <begin position="1"/>
        <end position="428"/>
    </location>
</feature>
<feature type="active site" description="Proton acceptor" evidence="1">
    <location>
        <position position="13"/>
    </location>
</feature>
<feature type="active site" description="Proton donor" evidence="1">
    <location>
        <position position="41"/>
    </location>
</feature>
<feature type="binding site" evidence="1">
    <location>
        <begin position="12"/>
        <end position="18"/>
    </location>
    <ligand>
        <name>GTP</name>
        <dbReference type="ChEBI" id="CHEBI:37565"/>
    </ligand>
</feature>
<feature type="binding site" description="in other chain" evidence="1">
    <location>
        <begin position="13"/>
        <end position="16"/>
    </location>
    <ligand>
        <name>IMP</name>
        <dbReference type="ChEBI" id="CHEBI:58053"/>
        <note>ligand shared between dimeric partners</note>
    </ligand>
</feature>
<feature type="binding site" evidence="1">
    <location>
        <position position="13"/>
    </location>
    <ligand>
        <name>Mg(2+)</name>
        <dbReference type="ChEBI" id="CHEBI:18420"/>
    </ligand>
</feature>
<feature type="binding site" description="in other chain" evidence="1">
    <location>
        <begin position="38"/>
        <end position="41"/>
    </location>
    <ligand>
        <name>IMP</name>
        <dbReference type="ChEBI" id="CHEBI:58053"/>
        <note>ligand shared between dimeric partners</note>
    </ligand>
</feature>
<feature type="binding site" evidence="1">
    <location>
        <begin position="40"/>
        <end position="42"/>
    </location>
    <ligand>
        <name>GTP</name>
        <dbReference type="ChEBI" id="CHEBI:37565"/>
    </ligand>
</feature>
<feature type="binding site" evidence="1">
    <location>
        <position position="40"/>
    </location>
    <ligand>
        <name>Mg(2+)</name>
        <dbReference type="ChEBI" id="CHEBI:18420"/>
    </ligand>
</feature>
<feature type="binding site" description="in other chain" evidence="1">
    <location>
        <position position="129"/>
    </location>
    <ligand>
        <name>IMP</name>
        <dbReference type="ChEBI" id="CHEBI:58053"/>
        <note>ligand shared between dimeric partners</note>
    </ligand>
</feature>
<feature type="binding site" evidence="1">
    <location>
        <position position="143"/>
    </location>
    <ligand>
        <name>IMP</name>
        <dbReference type="ChEBI" id="CHEBI:58053"/>
        <note>ligand shared between dimeric partners</note>
    </ligand>
</feature>
<feature type="binding site" description="in other chain" evidence="1">
    <location>
        <position position="224"/>
    </location>
    <ligand>
        <name>IMP</name>
        <dbReference type="ChEBI" id="CHEBI:58053"/>
        <note>ligand shared between dimeric partners</note>
    </ligand>
</feature>
<feature type="binding site" description="in other chain" evidence="1">
    <location>
        <position position="239"/>
    </location>
    <ligand>
        <name>IMP</name>
        <dbReference type="ChEBI" id="CHEBI:58053"/>
        <note>ligand shared between dimeric partners</note>
    </ligand>
</feature>
<feature type="binding site" evidence="1">
    <location>
        <begin position="299"/>
        <end position="305"/>
    </location>
    <ligand>
        <name>substrate</name>
    </ligand>
</feature>
<feature type="binding site" description="in other chain" evidence="1">
    <location>
        <position position="303"/>
    </location>
    <ligand>
        <name>IMP</name>
        <dbReference type="ChEBI" id="CHEBI:58053"/>
        <note>ligand shared between dimeric partners</note>
    </ligand>
</feature>
<feature type="binding site" evidence="1">
    <location>
        <position position="305"/>
    </location>
    <ligand>
        <name>GTP</name>
        <dbReference type="ChEBI" id="CHEBI:37565"/>
    </ligand>
</feature>
<feature type="binding site" evidence="1">
    <location>
        <begin position="331"/>
        <end position="333"/>
    </location>
    <ligand>
        <name>GTP</name>
        <dbReference type="ChEBI" id="CHEBI:37565"/>
    </ligand>
</feature>
<feature type="binding site" evidence="1">
    <location>
        <begin position="410"/>
        <end position="412"/>
    </location>
    <ligand>
        <name>GTP</name>
        <dbReference type="ChEBI" id="CHEBI:37565"/>
    </ligand>
</feature>
<reference key="1">
    <citation type="journal article" date="2009" name="PLoS ONE">
        <title>Complete genome sequence of Francisella tularensis subspecies holarctica FTNF002-00.</title>
        <authorList>
            <person name="Barabote R.D."/>
            <person name="Xie G."/>
            <person name="Brettin T.S."/>
            <person name="Hinrichs S.H."/>
            <person name="Fey P.D."/>
            <person name="Jay J.J."/>
            <person name="Engle J.L."/>
            <person name="Godbole S.D."/>
            <person name="Noronha J.M."/>
            <person name="Scheuermann R.H."/>
            <person name="Zhou L.W."/>
            <person name="Lion C."/>
            <person name="Dempsey M.P."/>
        </authorList>
    </citation>
    <scope>NUCLEOTIDE SEQUENCE [LARGE SCALE GENOMIC DNA]</scope>
    <source>
        <strain>FTNF002-00 / FTA</strain>
    </source>
</reference>
<keyword id="KW-0963">Cytoplasm</keyword>
<keyword id="KW-0342">GTP-binding</keyword>
<keyword id="KW-0436">Ligase</keyword>
<keyword id="KW-0460">Magnesium</keyword>
<keyword id="KW-0479">Metal-binding</keyword>
<keyword id="KW-0547">Nucleotide-binding</keyword>
<keyword id="KW-0658">Purine biosynthesis</keyword>
<name>PURA_FRATF</name>
<evidence type="ECO:0000255" key="1">
    <source>
        <dbReference type="HAMAP-Rule" id="MF_00011"/>
    </source>
</evidence>
<sequence>MSNIVIVGAQWGDEGKGKIADTLAEKADLVVRYQGGNNAGHTLVVNGKKTFLHLIPSGVLHQHTKCVIGHGVVLDPVALDEEITRLQAKGIAISAENLFVSESCTIITSYHKLLDAVRESNTSEKIGTTGKGIGPAYEDKVSRKGIKFKHLFDKDLLRSRLAISLAEKETLFRDLYKVEYPTLEQEFDKLFALGQKLKQYAADTFSIIDQAIAAGKNVVYEGAQGVLLDVDYGTYPFVTSSNTSVAGVYSGATTAGHGLDHVIGITKAYTTRVGEGPFPTELFDDVGKFIQHKGGEIGVTTGRIRRCGWLDLPLLKYSAKCSNLTSIALTKVDVLSDMDTLKVCIGYKYEGKEIYCAYPGIDLYKVEPILVEMEPFSIDETVTKDNMPAALKTYLKTIENHVGIPISSLAYGPSREQILFFEDYFKKG</sequence>
<accession>A7NEW1</accession>
<proteinExistence type="inferred from homology"/>
<gene>
    <name evidence="1" type="primary">purA</name>
    <name type="ordered locus">FTA_2039</name>
</gene>
<comment type="function">
    <text evidence="1">Plays an important role in the de novo pathway of purine nucleotide biosynthesis. Catalyzes the first committed step in the biosynthesis of AMP from IMP.</text>
</comment>
<comment type="catalytic activity">
    <reaction evidence="1">
        <text>IMP + L-aspartate + GTP = N(6)-(1,2-dicarboxyethyl)-AMP + GDP + phosphate + 2 H(+)</text>
        <dbReference type="Rhea" id="RHEA:15753"/>
        <dbReference type="ChEBI" id="CHEBI:15378"/>
        <dbReference type="ChEBI" id="CHEBI:29991"/>
        <dbReference type="ChEBI" id="CHEBI:37565"/>
        <dbReference type="ChEBI" id="CHEBI:43474"/>
        <dbReference type="ChEBI" id="CHEBI:57567"/>
        <dbReference type="ChEBI" id="CHEBI:58053"/>
        <dbReference type="ChEBI" id="CHEBI:58189"/>
        <dbReference type="EC" id="6.3.4.4"/>
    </reaction>
</comment>
<comment type="cofactor">
    <cofactor evidence="1">
        <name>Mg(2+)</name>
        <dbReference type="ChEBI" id="CHEBI:18420"/>
    </cofactor>
    <text evidence="1">Binds 1 Mg(2+) ion per subunit.</text>
</comment>
<comment type="pathway">
    <text evidence="1">Purine metabolism; AMP biosynthesis via de novo pathway; AMP from IMP: step 1/2.</text>
</comment>
<comment type="subunit">
    <text evidence="1">Homodimer.</text>
</comment>
<comment type="subcellular location">
    <subcellularLocation>
        <location evidence="1">Cytoplasm</location>
    </subcellularLocation>
</comment>
<comment type="similarity">
    <text evidence="1">Belongs to the adenylosuccinate synthetase family.</text>
</comment>
<organism>
    <name type="scientific">Francisella tularensis subsp. holarctica (strain FTNF002-00 / FTA)</name>
    <dbReference type="NCBI Taxonomy" id="458234"/>
    <lineage>
        <taxon>Bacteria</taxon>
        <taxon>Pseudomonadati</taxon>
        <taxon>Pseudomonadota</taxon>
        <taxon>Gammaproteobacteria</taxon>
        <taxon>Thiotrichales</taxon>
        <taxon>Francisellaceae</taxon>
        <taxon>Francisella</taxon>
    </lineage>
</organism>
<dbReference type="EC" id="6.3.4.4" evidence="1"/>
<dbReference type="EMBL" id="CP000803">
    <property type="protein sequence ID" value="ABU62514.1"/>
    <property type="molecule type" value="Genomic_DNA"/>
</dbReference>
<dbReference type="RefSeq" id="WP_003013911.1">
    <property type="nucleotide sequence ID" value="NC_009749.1"/>
</dbReference>
<dbReference type="SMR" id="A7NEW1"/>
<dbReference type="KEGG" id="fta:FTA_2039"/>
<dbReference type="HOGENOM" id="CLU_029848_0_0_6"/>
<dbReference type="UniPathway" id="UPA00075">
    <property type="reaction ID" value="UER00335"/>
</dbReference>
<dbReference type="GO" id="GO:0005737">
    <property type="term" value="C:cytoplasm"/>
    <property type="evidence" value="ECO:0007669"/>
    <property type="project" value="UniProtKB-SubCell"/>
</dbReference>
<dbReference type="GO" id="GO:0004019">
    <property type="term" value="F:adenylosuccinate synthase activity"/>
    <property type="evidence" value="ECO:0007669"/>
    <property type="project" value="UniProtKB-UniRule"/>
</dbReference>
<dbReference type="GO" id="GO:0005525">
    <property type="term" value="F:GTP binding"/>
    <property type="evidence" value="ECO:0007669"/>
    <property type="project" value="UniProtKB-UniRule"/>
</dbReference>
<dbReference type="GO" id="GO:0000287">
    <property type="term" value="F:magnesium ion binding"/>
    <property type="evidence" value="ECO:0007669"/>
    <property type="project" value="UniProtKB-UniRule"/>
</dbReference>
<dbReference type="GO" id="GO:0044208">
    <property type="term" value="P:'de novo' AMP biosynthetic process"/>
    <property type="evidence" value="ECO:0007669"/>
    <property type="project" value="UniProtKB-UniRule"/>
</dbReference>
<dbReference type="GO" id="GO:0046040">
    <property type="term" value="P:IMP metabolic process"/>
    <property type="evidence" value="ECO:0007669"/>
    <property type="project" value="TreeGrafter"/>
</dbReference>
<dbReference type="CDD" id="cd03108">
    <property type="entry name" value="AdSS"/>
    <property type="match status" value="1"/>
</dbReference>
<dbReference type="FunFam" id="1.10.300.10:FF:000001">
    <property type="entry name" value="Adenylosuccinate synthetase"/>
    <property type="match status" value="1"/>
</dbReference>
<dbReference type="FunFam" id="3.90.170.10:FF:000001">
    <property type="entry name" value="Adenylosuccinate synthetase"/>
    <property type="match status" value="1"/>
</dbReference>
<dbReference type="Gene3D" id="3.40.440.10">
    <property type="entry name" value="Adenylosuccinate Synthetase, subunit A, domain 1"/>
    <property type="match status" value="1"/>
</dbReference>
<dbReference type="Gene3D" id="1.10.300.10">
    <property type="entry name" value="Adenylosuccinate Synthetase, subunit A, domain 2"/>
    <property type="match status" value="1"/>
</dbReference>
<dbReference type="Gene3D" id="3.90.170.10">
    <property type="entry name" value="Adenylosuccinate Synthetase, subunit A, domain 3"/>
    <property type="match status" value="1"/>
</dbReference>
<dbReference type="HAMAP" id="MF_00011">
    <property type="entry name" value="Adenylosucc_synth"/>
    <property type="match status" value="1"/>
</dbReference>
<dbReference type="InterPro" id="IPR018220">
    <property type="entry name" value="Adenylosuccin_syn_GTP-bd"/>
</dbReference>
<dbReference type="InterPro" id="IPR033128">
    <property type="entry name" value="Adenylosuccin_syn_Lys_AS"/>
</dbReference>
<dbReference type="InterPro" id="IPR042109">
    <property type="entry name" value="Adenylosuccinate_synth_dom1"/>
</dbReference>
<dbReference type="InterPro" id="IPR042110">
    <property type="entry name" value="Adenylosuccinate_synth_dom2"/>
</dbReference>
<dbReference type="InterPro" id="IPR042111">
    <property type="entry name" value="Adenylosuccinate_synth_dom3"/>
</dbReference>
<dbReference type="InterPro" id="IPR001114">
    <property type="entry name" value="Adenylosuccinate_synthetase"/>
</dbReference>
<dbReference type="InterPro" id="IPR027417">
    <property type="entry name" value="P-loop_NTPase"/>
</dbReference>
<dbReference type="NCBIfam" id="NF002223">
    <property type="entry name" value="PRK01117.1"/>
    <property type="match status" value="1"/>
</dbReference>
<dbReference type="NCBIfam" id="TIGR00184">
    <property type="entry name" value="purA"/>
    <property type="match status" value="1"/>
</dbReference>
<dbReference type="PANTHER" id="PTHR11846">
    <property type="entry name" value="ADENYLOSUCCINATE SYNTHETASE"/>
    <property type="match status" value="1"/>
</dbReference>
<dbReference type="PANTHER" id="PTHR11846:SF0">
    <property type="entry name" value="ADENYLOSUCCINATE SYNTHETASE"/>
    <property type="match status" value="1"/>
</dbReference>
<dbReference type="Pfam" id="PF00709">
    <property type="entry name" value="Adenylsucc_synt"/>
    <property type="match status" value="1"/>
</dbReference>
<dbReference type="SMART" id="SM00788">
    <property type="entry name" value="Adenylsucc_synt"/>
    <property type="match status" value="1"/>
</dbReference>
<dbReference type="SUPFAM" id="SSF52540">
    <property type="entry name" value="P-loop containing nucleoside triphosphate hydrolases"/>
    <property type="match status" value="1"/>
</dbReference>
<dbReference type="PROSITE" id="PS01266">
    <property type="entry name" value="ADENYLOSUCCIN_SYN_1"/>
    <property type="match status" value="1"/>
</dbReference>
<dbReference type="PROSITE" id="PS00513">
    <property type="entry name" value="ADENYLOSUCCIN_SYN_2"/>
    <property type="match status" value="1"/>
</dbReference>